<reference key="1">
    <citation type="journal article" date="2005" name="Genome Res.">
        <title>Sequence, annotation, and analysis of synteny between rice chromosome 3 and diverged grass species.</title>
        <authorList>
            <consortium name="The rice chromosome 3 sequencing consortium"/>
            <person name="Buell C.R."/>
            <person name="Yuan Q."/>
            <person name="Ouyang S."/>
            <person name="Liu J."/>
            <person name="Zhu W."/>
            <person name="Wang A."/>
            <person name="Maiti R."/>
            <person name="Haas B."/>
            <person name="Wortman J."/>
            <person name="Pertea M."/>
            <person name="Jones K.M."/>
            <person name="Kim M."/>
            <person name="Overton L."/>
            <person name="Tsitrin T."/>
            <person name="Fadrosh D."/>
            <person name="Bera J."/>
            <person name="Weaver B."/>
            <person name="Jin S."/>
            <person name="Johri S."/>
            <person name="Reardon M."/>
            <person name="Webb K."/>
            <person name="Hill J."/>
            <person name="Moffat K."/>
            <person name="Tallon L."/>
            <person name="Van Aken S."/>
            <person name="Lewis M."/>
            <person name="Utterback T."/>
            <person name="Feldblyum T."/>
            <person name="Zismann V."/>
            <person name="Iobst S."/>
            <person name="Hsiao J."/>
            <person name="de Vazeille A.R."/>
            <person name="Salzberg S.L."/>
            <person name="White O."/>
            <person name="Fraser C.M."/>
            <person name="Yu Y."/>
            <person name="Kim H."/>
            <person name="Rambo T."/>
            <person name="Currie J."/>
            <person name="Collura K."/>
            <person name="Kernodle-Thompson S."/>
            <person name="Wei F."/>
            <person name="Kudrna K."/>
            <person name="Ammiraju J.S.S."/>
            <person name="Luo M."/>
            <person name="Goicoechea J.L."/>
            <person name="Wing R.A."/>
            <person name="Henry D."/>
            <person name="Oates R."/>
            <person name="Palmer M."/>
            <person name="Pries G."/>
            <person name="Saski C."/>
            <person name="Simmons J."/>
            <person name="Soderlund C."/>
            <person name="Nelson W."/>
            <person name="de la Bastide M."/>
            <person name="Spiegel L."/>
            <person name="Nascimento L."/>
            <person name="Huang E."/>
            <person name="Preston R."/>
            <person name="Zutavern T."/>
            <person name="Palmer L."/>
            <person name="O'Shaughnessy A."/>
            <person name="Dike S."/>
            <person name="McCombie W.R."/>
            <person name="Minx P."/>
            <person name="Cordum H."/>
            <person name="Wilson R."/>
            <person name="Jin W."/>
            <person name="Lee H.R."/>
            <person name="Jiang J."/>
            <person name="Jackson S."/>
        </authorList>
    </citation>
    <scope>NUCLEOTIDE SEQUENCE [LARGE SCALE GENOMIC DNA]</scope>
    <source>
        <strain>cv. Nipponbare</strain>
    </source>
</reference>
<reference key="2">
    <citation type="journal article" date="2005" name="Nature">
        <title>The map-based sequence of the rice genome.</title>
        <authorList>
            <consortium name="International rice genome sequencing project (IRGSP)"/>
        </authorList>
    </citation>
    <scope>NUCLEOTIDE SEQUENCE [LARGE SCALE GENOMIC DNA]</scope>
    <source>
        <strain>cv. Nipponbare</strain>
    </source>
</reference>
<reference key="3">
    <citation type="journal article" date="2008" name="Nucleic Acids Res.">
        <title>The rice annotation project database (RAP-DB): 2008 update.</title>
        <authorList>
            <consortium name="The rice annotation project (RAP)"/>
        </authorList>
    </citation>
    <scope>GENOME REANNOTATION</scope>
    <source>
        <strain>cv. Nipponbare</strain>
    </source>
</reference>
<reference key="4">
    <citation type="journal article" date="2013" name="Rice">
        <title>Improvement of the Oryza sativa Nipponbare reference genome using next generation sequence and optical map data.</title>
        <authorList>
            <person name="Kawahara Y."/>
            <person name="de la Bastide M."/>
            <person name="Hamilton J.P."/>
            <person name="Kanamori H."/>
            <person name="McCombie W.R."/>
            <person name="Ouyang S."/>
            <person name="Schwartz D.C."/>
            <person name="Tanaka T."/>
            <person name="Wu J."/>
            <person name="Zhou S."/>
            <person name="Childs K.L."/>
            <person name="Davidson R.M."/>
            <person name="Lin H."/>
            <person name="Quesada-Ocampo L."/>
            <person name="Vaillancourt B."/>
            <person name="Sakai H."/>
            <person name="Lee S.S."/>
            <person name="Kim J."/>
            <person name="Numa H."/>
            <person name="Itoh T."/>
            <person name="Buell C.R."/>
            <person name="Matsumoto T."/>
        </authorList>
    </citation>
    <scope>GENOME REANNOTATION</scope>
    <source>
        <strain>cv. Nipponbare</strain>
    </source>
</reference>
<reference key="5">
    <citation type="journal article" date="2005" name="PLoS Biol.">
        <title>The genomes of Oryza sativa: a history of duplications.</title>
        <authorList>
            <person name="Yu J."/>
            <person name="Wang J."/>
            <person name="Lin W."/>
            <person name="Li S."/>
            <person name="Li H."/>
            <person name="Zhou J."/>
            <person name="Ni P."/>
            <person name="Dong W."/>
            <person name="Hu S."/>
            <person name="Zeng C."/>
            <person name="Zhang J."/>
            <person name="Zhang Y."/>
            <person name="Li R."/>
            <person name="Xu Z."/>
            <person name="Li S."/>
            <person name="Li X."/>
            <person name="Zheng H."/>
            <person name="Cong L."/>
            <person name="Lin L."/>
            <person name="Yin J."/>
            <person name="Geng J."/>
            <person name="Li G."/>
            <person name="Shi J."/>
            <person name="Liu J."/>
            <person name="Lv H."/>
            <person name="Li J."/>
            <person name="Wang J."/>
            <person name="Deng Y."/>
            <person name="Ran L."/>
            <person name="Shi X."/>
            <person name="Wang X."/>
            <person name="Wu Q."/>
            <person name="Li C."/>
            <person name="Ren X."/>
            <person name="Wang J."/>
            <person name="Wang X."/>
            <person name="Li D."/>
            <person name="Liu D."/>
            <person name="Zhang X."/>
            <person name="Ji Z."/>
            <person name="Zhao W."/>
            <person name="Sun Y."/>
            <person name="Zhang Z."/>
            <person name="Bao J."/>
            <person name="Han Y."/>
            <person name="Dong L."/>
            <person name="Ji J."/>
            <person name="Chen P."/>
            <person name="Wu S."/>
            <person name="Liu J."/>
            <person name="Xiao Y."/>
            <person name="Bu D."/>
            <person name="Tan J."/>
            <person name="Yang L."/>
            <person name="Ye C."/>
            <person name="Zhang J."/>
            <person name="Xu J."/>
            <person name="Zhou Y."/>
            <person name="Yu Y."/>
            <person name="Zhang B."/>
            <person name="Zhuang S."/>
            <person name="Wei H."/>
            <person name="Liu B."/>
            <person name="Lei M."/>
            <person name="Yu H."/>
            <person name="Li Y."/>
            <person name="Xu H."/>
            <person name="Wei S."/>
            <person name="He X."/>
            <person name="Fang L."/>
            <person name="Zhang Z."/>
            <person name="Zhang Y."/>
            <person name="Huang X."/>
            <person name="Su Z."/>
            <person name="Tong W."/>
            <person name="Li J."/>
            <person name="Tong Z."/>
            <person name="Li S."/>
            <person name="Ye J."/>
            <person name="Wang L."/>
            <person name="Fang L."/>
            <person name="Lei T."/>
            <person name="Chen C.-S."/>
            <person name="Chen H.-C."/>
            <person name="Xu Z."/>
            <person name="Li H."/>
            <person name="Huang H."/>
            <person name="Zhang F."/>
            <person name="Xu H."/>
            <person name="Li N."/>
            <person name="Zhao C."/>
            <person name="Li S."/>
            <person name="Dong L."/>
            <person name="Huang Y."/>
            <person name="Li L."/>
            <person name="Xi Y."/>
            <person name="Qi Q."/>
            <person name="Li W."/>
            <person name="Zhang B."/>
            <person name="Hu W."/>
            <person name="Zhang Y."/>
            <person name="Tian X."/>
            <person name="Jiao Y."/>
            <person name="Liang X."/>
            <person name="Jin J."/>
            <person name="Gao L."/>
            <person name="Zheng W."/>
            <person name="Hao B."/>
            <person name="Liu S.-M."/>
            <person name="Wang W."/>
            <person name="Yuan L."/>
            <person name="Cao M."/>
            <person name="McDermott J."/>
            <person name="Samudrala R."/>
            <person name="Wang J."/>
            <person name="Wong G.K.-S."/>
            <person name="Yang H."/>
        </authorList>
    </citation>
    <scope>NUCLEOTIDE SEQUENCE [LARGE SCALE GENOMIC DNA]</scope>
    <source>
        <strain>cv. Nipponbare</strain>
    </source>
</reference>
<reference key="6">
    <citation type="journal article" date="2005" name="Plant Mol. Biol.">
        <title>Functional identification of a trehalose 6-phosphate phosphatase gene that is involved in transient induction of trehalose biosynthesis during chilling stress in rice.</title>
        <authorList>
            <person name="Pramanik M.H."/>
            <person name="Imai R."/>
        </authorList>
    </citation>
    <scope>GENE FAMILY</scope>
    <scope>NOMENCLATURE</scope>
    <source>
        <strain>cv. Yukihikari</strain>
    </source>
</reference>
<accession>Q10KF5</accession>
<accession>Q6AVE7</accession>
<gene>
    <name type="primary">TPP9</name>
    <name type="ordered locus">Os03g0386500</name>
    <name type="ordered locus">LOC_Os03g26910</name>
    <name type="ORF">OsJ_11091</name>
    <name type="ORF">OSJNBb0058G04.17</name>
</gene>
<protein>
    <recommendedName>
        <fullName>Probable trehalose-phosphate phosphatase 9</fullName>
        <shortName>OsTPP9</shortName>
        <ecNumber>3.1.3.12</ecNumber>
    </recommendedName>
    <alternativeName>
        <fullName>Trehalose 6-phosphate phosphatase</fullName>
    </alternativeName>
</protein>
<proteinExistence type="inferred from homology"/>
<sequence length="374" mass="40214">MTKHGAVVVPEDAVVAAAAVGRHFSFPPPRTGGVGGDSCKKLAAQQIDLGAAVIGSWLDSMKASSPRHRLVAPAVAAAAADAEHDEWMEKHPSALGKFEALAAAAKGKRIVVFLDYDGTLSPIVEDPDRAVMTDEMRDAVRGVAARFPTAIVSGRCRDKVLSFVGLEELYYAGSHGMDIQGPTNAAASKGGEEEEESVLCQPAREFLPMIGEAYAALVEKVEGVIPGAKVENNKFCLSVHFRRVDERRWGAVADQVRAVLRGYPRLRLTQGRKVLEVRPAIKWDKGEALRFLLSALGFSAAGDVEDDGDDDDAFPIYIGDDRTDEDAFRVLRARGHGAGILVSRFPKDTCASFSLRDPGEVKDFLRKLVTCAAA</sequence>
<feature type="chain" id="PRO_0000417661" description="Probable trehalose-phosphate phosphatase 9">
    <location>
        <begin position="1"/>
        <end position="374"/>
    </location>
</feature>
<name>TPP9_ORYSJ</name>
<dbReference type="EC" id="3.1.3.12"/>
<dbReference type="EMBL" id="AC103551">
    <property type="protein sequence ID" value="AAT78804.1"/>
    <property type="status" value="ALT_SEQ"/>
    <property type="molecule type" value="Genomic_DNA"/>
</dbReference>
<dbReference type="EMBL" id="DP000009">
    <property type="protein sequence ID" value="ABF96314.1"/>
    <property type="molecule type" value="Genomic_DNA"/>
</dbReference>
<dbReference type="EMBL" id="AP008209">
    <property type="protein sequence ID" value="BAF12169.1"/>
    <property type="status" value="ALT_SEQ"/>
    <property type="molecule type" value="Genomic_DNA"/>
</dbReference>
<dbReference type="EMBL" id="AP014959">
    <property type="status" value="NOT_ANNOTATED_CDS"/>
    <property type="molecule type" value="Genomic_DNA"/>
</dbReference>
<dbReference type="EMBL" id="CM000140">
    <property type="protein sequence ID" value="EEE59168.1"/>
    <property type="status" value="ALT_SEQ"/>
    <property type="molecule type" value="Genomic_DNA"/>
</dbReference>
<dbReference type="RefSeq" id="XP_015628649.1">
    <property type="nucleotide sequence ID" value="XM_015773163.1"/>
</dbReference>
<dbReference type="SMR" id="Q10KF5"/>
<dbReference type="FunCoup" id="Q10KF5">
    <property type="interactions" value="141"/>
</dbReference>
<dbReference type="STRING" id="39947.Q10KF5"/>
<dbReference type="PaxDb" id="39947-Q10KF5"/>
<dbReference type="KEGG" id="dosa:Os03g0386500"/>
<dbReference type="eggNOG" id="KOG1050">
    <property type="taxonomic scope" value="Eukaryota"/>
</dbReference>
<dbReference type="HOGENOM" id="CLU_037265_1_1_1"/>
<dbReference type="InParanoid" id="Q10KF5"/>
<dbReference type="OrthoDB" id="411251at2759"/>
<dbReference type="UniPathway" id="UPA00299"/>
<dbReference type="Proteomes" id="UP000000763">
    <property type="component" value="Chromosome 3"/>
</dbReference>
<dbReference type="Proteomes" id="UP000007752">
    <property type="component" value="Chromosome 3"/>
</dbReference>
<dbReference type="Proteomes" id="UP000059680">
    <property type="component" value="Chromosome 3"/>
</dbReference>
<dbReference type="GO" id="GO:0004805">
    <property type="term" value="F:trehalose-phosphatase activity"/>
    <property type="evidence" value="ECO:0000318"/>
    <property type="project" value="GO_Central"/>
</dbReference>
<dbReference type="GO" id="GO:0005992">
    <property type="term" value="P:trehalose biosynthetic process"/>
    <property type="evidence" value="ECO:0000318"/>
    <property type="project" value="GO_Central"/>
</dbReference>
<dbReference type="CDD" id="cd01627">
    <property type="entry name" value="HAD_TPP"/>
    <property type="match status" value="1"/>
</dbReference>
<dbReference type="FunFam" id="3.30.70.1020:FF:000004">
    <property type="entry name" value="Trehalose 6-phosphate phosphatase"/>
    <property type="match status" value="1"/>
</dbReference>
<dbReference type="FunFam" id="3.40.50.1000:FF:000099">
    <property type="entry name" value="Trehalose 6-phosphate phosphatase"/>
    <property type="match status" value="1"/>
</dbReference>
<dbReference type="FunFam" id="3.40.50.1000:FF:000175">
    <property type="entry name" value="Trehalose 6-phosphate phosphatase"/>
    <property type="match status" value="1"/>
</dbReference>
<dbReference type="Gene3D" id="3.40.50.1000">
    <property type="entry name" value="HAD superfamily/HAD-like"/>
    <property type="match status" value="2"/>
</dbReference>
<dbReference type="InterPro" id="IPR036412">
    <property type="entry name" value="HAD-like_sf"/>
</dbReference>
<dbReference type="InterPro" id="IPR006379">
    <property type="entry name" value="HAD-SF_hydro_IIB"/>
</dbReference>
<dbReference type="InterPro" id="IPR023214">
    <property type="entry name" value="HAD_sf"/>
</dbReference>
<dbReference type="InterPro" id="IPR044651">
    <property type="entry name" value="OTSB-like"/>
</dbReference>
<dbReference type="InterPro" id="IPR003337">
    <property type="entry name" value="Trehalose_PPase"/>
</dbReference>
<dbReference type="NCBIfam" id="TIGR01484">
    <property type="entry name" value="HAD-SF-IIB"/>
    <property type="match status" value="1"/>
</dbReference>
<dbReference type="NCBIfam" id="TIGR00685">
    <property type="entry name" value="T6PP"/>
    <property type="match status" value="1"/>
</dbReference>
<dbReference type="PANTHER" id="PTHR43768">
    <property type="entry name" value="TREHALOSE 6-PHOSPHATE PHOSPHATASE"/>
    <property type="match status" value="1"/>
</dbReference>
<dbReference type="PANTHER" id="PTHR43768:SF56">
    <property type="entry name" value="TREHALOSE-PHOSPHATE PHOSPHATASE 9-RELATED"/>
    <property type="match status" value="1"/>
</dbReference>
<dbReference type="Pfam" id="PF02358">
    <property type="entry name" value="Trehalose_PPase"/>
    <property type="match status" value="1"/>
</dbReference>
<dbReference type="SUPFAM" id="SSF56784">
    <property type="entry name" value="HAD-like"/>
    <property type="match status" value="1"/>
</dbReference>
<organism>
    <name type="scientific">Oryza sativa subsp. japonica</name>
    <name type="common">Rice</name>
    <dbReference type="NCBI Taxonomy" id="39947"/>
    <lineage>
        <taxon>Eukaryota</taxon>
        <taxon>Viridiplantae</taxon>
        <taxon>Streptophyta</taxon>
        <taxon>Embryophyta</taxon>
        <taxon>Tracheophyta</taxon>
        <taxon>Spermatophyta</taxon>
        <taxon>Magnoliopsida</taxon>
        <taxon>Liliopsida</taxon>
        <taxon>Poales</taxon>
        <taxon>Poaceae</taxon>
        <taxon>BOP clade</taxon>
        <taxon>Oryzoideae</taxon>
        <taxon>Oryzeae</taxon>
        <taxon>Oryzinae</taxon>
        <taxon>Oryza</taxon>
        <taxon>Oryza sativa</taxon>
    </lineage>
</organism>
<evidence type="ECO:0000250" key="1"/>
<evidence type="ECO:0000305" key="2"/>
<keyword id="KW-0378">Hydrolase</keyword>
<keyword id="KW-1185">Reference proteome</keyword>
<keyword id="KW-0346">Stress response</keyword>
<comment type="function">
    <text evidence="1">Removes the phosphate from trehalose 6-phosphate to produce free trehalose. Trehalose accumulation in plant may improve abiotic stress tolerance (By similarity).</text>
</comment>
<comment type="catalytic activity">
    <reaction>
        <text>alpha,alpha-trehalose 6-phosphate + H2O = alpha,alpha-trehalose + phosphate</text>
        <dbReference type="Rhea" id="RHEA:23420"/>
        <dbReference type="ChEBI" id="CHEBI:15377"/>
        <dbReference type="ChEBI" id="CHEBI:16551"/>
        <dbReference type="ChEBI" id="CHEBI:43474"/>
        <dbReference type="ChEBI" id="CHEBI:58429"/>
        <dbReference type="EC" id="3.1.3.12"/>
    </reaction>
</comment>
<comment type="cofactor">
    <cofactor evidence="1">
        <name>a divalent metal cation</name>
        <dbReference type="ChEBI" id="CHEBI:60240"/>
    </cofactor>
</comment>
<comment type="pathway">
    <text>Glycan biosynthesis; trehalose biosynthesis.</text>
</comment>
<comment type="similarity">
    <text evidence="2">Belongs to the trehalose phosphatase family.</text>
</comment>
<comment type="sequence caution" evidence="2">
    <conflict type="erroneous gene model prediction">
        <sequence resource="EMBL-CDS" id="AAT78804"/>
    </conflict>
</comment>
<comment type="sequence caution" evidence="2">
    <conflict type="erroneous gene model prediction">
        <sequence resource="EMBL-CDS" id="BAF12169"/>
    </conflict>
</comment>
<comment type="sequence caution" evidence="2">
    <conflict type="erroneous gene model prediction">
        <sequence resource="EMBL-CDS" id="EEE59168"/>
    </conflict>
</comment>